<evidence type="ECO:0000255" key="1">
    <source>
        <dbReference type="HAMAP-Rule" id="MF_01249"/>
    </source>
</evidence>
<feature type="chain" id="PRO_1000067165" description="HPr kinase/phosphorylase">
    <location>
        <begin position="1"/>
        <end position="316"/>
    </location>
</feature>
<feature type="region of interest" description="Important for the catalytic mechanism of both phosphorylation and dephosphorylation" evidence="1">
    <location>
        <begin position="209"/>
        <end position="218"/>
    </location>
</feature>
<feature type="region of interest" description="Important for the catalytic mechanism of dephosphorylation" evidence="1">
    <location>
        <begin position="273"/>
        <end position="278"/>
    </location>
</feature>
<feature type="active site" evidence="1">
    <location>
        <position position="146"/>
    </location>
</feature>
<feature type="active site" evidence="1">
    <location>
        <position position="167"/>
    </location>
</feature>
<feature type="active site" description="Proton acceptor; for phosphorylation activity. Proton donor; for dephosphorylation activity" evidence="1">
    <location>
        <position position="185"/>
    </location>
</feature>
<feature type="active site" evidence="1">
    <location>
        <position position="252"/>
    </location>
</feature>
<feature type="binding site" evidence="1">
    <location>
        <begin position="161"/>
        <end position="168"/>
    </location>
    <ligand>
        <name>ATP</name>
        <dbReference type="ChEBI" id="CHEBI:30616"/>
    </ligand>
</feature>
<feature type="binding site" evidence="1">
    <location>
        <position position="168"/>
    </location>
    <ligand>
        <name>Mg(2+)</name>
        <dbReference type="ChEBI" id="CHEBI:18420"/>
    </ligand>
</feature>
<feature type="binding site" evidence="1">
    <location>
        <position position="210"/>
    </location>
    <ligand>
        <name>Mg(2+)</name>
        <dbReference type="ChEBI" id="CHEBI:18420"/>
    </ligand>
</feature>
<name>HPRK_POLNA</name>
<sequence>MKPTVVSADVLFEDHRATLKWEWVAGLGASERRFDEVAVSEARSGADLVGYLNYIHPYRVQILGEREVAYLSHVGPEDSARRISRIITLEPPVLVVADGQTAPDTLLSMCERAQLPMFATPESAAFVIDVLRAYLSRHFAERTSMHGVFMDILGMGVMITGESGLGKSELGLELISRGHGLVADDAIDLFRINQTAIEGRCPDLLQNLLEVRGIGLLDIKAIFGETAVRRKMRLKMIVHLVRRETLERDYERIPYEPLTQDVLGVPVRKVIIQVEAGRNIAVLVEAAVRNAILQLRGINTYQEFVERHRRAMEQDD</sequence>
<comment type="function">
    <text evidence="1">Catalyzes the ATP- as well as the pyrophosphate-dependent phosphorylation of a specific serine residue in HPr, a phosphocarrier protein of the phosphoenolpyruvate-dependent sugar phosphotransferase system (PTS). HprK/P also catalyzes the pyrophosphate-producing, inorganic phosphate-dependent dephosphorylation (phosphorolysis) of seryl-phosphorylated HPr (P-Ser-HPr).</text>
</comment>
<comment type="catalytic activity">
    <reaction evidence="1">
        <text>[HPr protein]-L-serine + ATP = [HPr protein]-O-phospho-L-serine + ADP + H(+)</text>
        <dbReference type="Rhea" id="RHEA:46600"/>
        <dbReference type="Rhea" id="RHEA-COMP:11602"/>
        <dbReference type="Rhea" id="RHEA-COMP:11603"/>
        <dbReference type="ChEBI" id="CHEBI:15378"/>
        <dbReference type="ChEBI" id="CHEBI:29999"/>
        <dbReference type="ChEBI" id="CHEBI:30616"/>
        <dbReference type="ChEBI" id="CHEBI:83421"/>
        <dbReference type="ChEBI" id="CHEBI:456216"/>
    </reaction>
</comment>
<comment type="catalytic activity">
    <reaction evidence="1">
        <text>[HPr protein]-O-phospho-L-serine + phosphate + H(+) = [HPr protein]-L-serine + diphosphate</text>
        <dbReference type="Rhea" id="RHEA:46604"/>
        <dbReference type="Rhea" id="RHEA-COMP:11602"/>
        <dbReference type="Rhea" id="RHEA-COMP:11603"/>
        <dbReference type="ChEBI" id="CHEBI:15378"/>
        <dbReference type="ChEBI" id="CHEBI:29999"/>
        <dbReference type="ChEBI" id="CHEBI:33019"/>
        <dbReference type="ChEBI" id="CHEBI:43474"/>
        <dbReference type="ChEBI" id="CHEBI:83421"/>
    </reaction>
</comment>
<comment type="cofactor">
    <cofactor evidence="1">
        <name>Mg(2+)</name>
        <dbReference type="ChEBI" id="CHEBI:18420"/>
    </cofactor>
</comment>
<comment type="subunit">
    <text evidence="1">Homohexamer.</text>
</comment>
<comment type="domain">
    <text evidence="1">The Walker A ATP-binding motif also binds Pi and PPi.</text>
</comment>
<comment type="miscellaneous">
    <text evidence="1">Both phosphorylation and phosphorolysis are carried out by the same active site and suggest a common mechanism for both reactions.</text>
</comment>
<comment type="similarity">
    <text evidence="1">Belongs to the HPrK/P family.</text>
</comment>
<gene>
    <name evidence="1" type="primary">hprK</name>
    <name type="ordered locus">Pnap_3792</name>
</gene>
<organism>
    <name type="scientific">Polaromonas naphthalenivorans (strain CJ2)</name>
    <dbReference type="NCBI Taxonomy" id="365044"/>
    <lineage>
        <taxon>Bacteria</taxon>
        <taxon>Pseudomonadati</taxon>
        <taxon>Pseudomonadota</taxon>
        <taxon>Betaproteobacteria</taxon>
        <taxon>Burkholderiales</taxon>
        <taxon>Comamonadaceae</taxon>
        <taxon>Polaromonas</taxon>
    </lineage>
</organism>
<proteinExistence type="inferred from homology"/>
<reference key="1">
    <citation type="journal article" date="2009" name="Environ. Microbiol.">
        <title>The genome of Polaromonas naphthalenivorans strain CJ2, isolated from coal tar-contaminated sediment, reveals physiological and metabolic versatility and evolution through extensive horizontal gene transfer.</title>
        <authorList>
            <person name="Yagi J.M."/>
            <person name="Sims D."/>
            <person name="Brettin T."/>
            <person name="Bruce D."/>
            <person name="Madsen E.L."/>
        </authorList>
    </citation>
    <scope>NUCLEOTIDE SEQUENCE [LARGE SCALE GENOMIC DNA]</scope>
    <source>
        <strain>CJ2</strain>
    </source>
</reference>
<accession>A1VTW0</accession>
<protein>
    <recommendedName>
        <fullName evidence="1">HPr kinase/phosphorylase</fullName>
        <shortName evidence="1">HPrK/P</shortName>
        <ecNumber evidence="1">2.7.11.-</ecNumber>
        <ecNumber evidence="1">2.7.4.-</ecNumber>
    </recommendedName>
    <alternativeName>
        <fullName evidence="1">HPr(Ser) kinase/phosphorylase</fullName>
    </alternativeName>
</protein>
<dbReference type="EC" id="2.7.11.-" evidence="1"/>
<dbReference type="EC" id="2.7.4.-" evidence="1"/>
<dbReference type="EMBL" id="CP000529">
    <property type="protein sequence ID" value="ABM39088.1"/>
    <property type="molecule type" value="Genomic_DNA"/>
</dbReference>
<dbReference type="RefSeq" id="WP_011803154.1">
    <property type="nucleotide sequence ID" value="NC_008781.1"/>
</dbReference>
<dbReference type="SMR" id="A1VTW0"/>
<dbReference type="STRING" id="365044.Pnap_3792"/>
<dbReference type="KEGG" id="pna:Pnap_3792"/>
<dbReference type="eggNOG" id="COG1493">
    <property type="taxonomic scope" value="Bacteria"/>
</dbReference>
<dbReference type="HOGENOM" id="CLU_052030_0_1_4"/>
<dbReference type="OrthoDB" id="9778803at2"/>
<dbReference type="Proteomes" id="UP000000644">
    <property type="component" value="Chromosome"/>
</dbReference>
<dbReference type="GO" id="GO:0005524">
    <property type="term" value="F:ATP binding"/>
    <property type="evidence" value="ECO:0007669"/>
    <property type="project" value="UniProtKB-UniRule"/>
</dbReference>
<dbReference type="GO" id="GO:0000287">
    <property type="term" value="F:magnesium ion binding"/>
    <property type="evidence" value="ECO:0007669"/>
    <property type="project" value="UniProtKB-UniRule"/>
</dbReference>
<dbReference type="GO" id="GO:0000155">
    <property type="term" value="F:phosphorelay sensor kinase activity"/>
    <property type="evidence" value="ECO:0007669"/>
    <property type="project" value="InterPro"/>
</dbReference>
<dbReference type="GO" id="GO:0004674">
    <property type="term" value="F:protein serine/threonine kinase activity"/>
    <property type="evidence" value="ECO:0007669"/>
    <property type="project" value="UniProtKB-KW"/>
</dbReference>
<dbReference type="GO" id="GO:0004712">
    <property type="term" value="F:protein serine/threonine/tyrosine kinase activity"/>
    <property type="evidence" value="ECO:0007669"/>
    <property type="project" value="UniProtKB-UniRule"/>
</dbReference>
<dbReference type="GO" id="GO:0006109">
    <property type="term" value="P:regulation of carbohydrate metabolic process"/>
    <property type="evidence" value="ECO:0007669"/>
    <property type="project" value="UniProtKB-UniRule"/>
</dbReference>
<dbReference type="CDD" id="cd01918">
    <property type="entry name" value="HprK_C"/>
    <property type="match status" value="1"/>
</dbReference>
<dbReference type="FunFam" id="3.40.50.300:FF:000174">
    <property type="entry name" value="HPr kinase/phosphorylase"/>
    <property type="match status" value="1"/>
</dbReference>
<dbReference type="Gene3D" id="3.40.1390.20">
    <property type="entry name" value="HprK N-terminal domain-like"/>
    <property type="match status" value="1"/>
</dbReference>
<dbReference type="Gene3D" id="3.40.50.300">
    <property type="entry name" value="P-loop containing nucleotide triphosphate hydrolases"/>
    <property type="match status" value="1"/>
</dbReference>
<dbReference type="HAMAP" id="MF_01249">
    <property type="entry name" value="HPr_kinase"/>
    <property type="match status" value="1"/>
</dbReference>
<dbReference type="InterPro" id="IPR003755">
    <property type="entry name" value="HPr(Ser)_kin/Pase"/>
</dbReference>
<dbReference type="InterPro" id="IPR011104">
    <property type="entry name" value="Hpr_kin/Pase_C"/>
</dbReference>
<dbReference type="InterPro" id="IPR011126">
    <property type="entry name" value="Hpr_kin/Pase_Hpr_N"/>
</dbReference>
<dbReference type="InterPro" id="IPR027417">
    <property type="entry name" value="P-loop_NTPase"/>
</dbReference>
<dbReference type="InterPro" id="IPR028979">
    <property type="entry name" value="Ser_kin/Pase_Hpr-like_N_sf"/>
</dbReference>
<dbReference type="NCBIfam" id="TIGR00679">
    <property type="entry name" value="hpr-ser"/>
    <property type="match status" value="1"/>
</dbReference>
<dbReference type="PANTHER" id="PTHR30305:SF1">
    <property type="entry name" value="HPR KINASE_PHOSPHORYLASE"/>
    <property type="match status" value="1"/>
</dbReference>
<dbReference type="PANTHER" id="PTHR30305">
    <property type="entry name" value="PROTEIN YJDM-RELATED"/>
    <property type="match status" value="1"/>
</dbReference>
<dbReference type="Pfam" id="PF07475">
    <property type="entry name" value="Hpr_kinase_C"/>
    <property type="match status" value="1"/>
</dbReference>
<dbReference type="Pfam" id="PF02603">
    <property type="entry name" value="Hpr_kinase_N"/>
    <property type="match status" value="1"/>
</dbReference>
<dbReference type="SUPFAM" id="SSF75138">
    <property type="entry name" value="HprK N-terminal domain-like"/>
    <property type="match status" value="1"/>
</dbReference>
<dbReference type="SUPFAM" id="SSF53795">
    <property type="entry name" value="PEP carboxykinase-like"/>
    <property type="match status" value="1"/>
</dbReference>
<keyword id="KW-0067">ATP-binding</keyword>
<keyword id="KW-0418">Kinase</keyword>
<keyword id="KW-0460">Magnesium</keyword>
<keyword id="KW-0479">Metal-binding</keyword>
<keyword id="KW-0511">Multifunctional enzyme</keyword>
<keyword id="KW-0547">Nucleotide-binding</keyword>
<keyword id="KW-1185">Reference proteome</keyword>
<keyword id="KW-0723">Serine/threonine-protein kinase</keyword>
<keyword id="KW-0808">Transferase</keyword>